<sequence length="867" mass="97992">MMFSKRKSIRFNPEGDYTELPRGGYVVPSKLGGIQFGVPPETIKDSMALKIDVPTIYVFPEELWDRKTGINAAEAEFPAYFNYFILKRKVSFVCTKEQEQRIRIVFQETLLGPPEFNTGIIINSSSSTTDTSKTSPIKKQTSSSSPPLSPQQQQPPPPLVKQPSQQQLEELATMDTCHYHHHHHHQEVNDNDNNNNTTTNNNNIEILEQQQQQQQQQQQQQDEDSTDVDEEFQKEFSSTFPRSEIPNLEKECKYLRTFNSVDELFDFILFDDNGIAKLSDDVEIHFQEDQSLFKVLQFEETGKGNKVQTLVATIPSKILFPDMINSISTINDNKIFDPPTFGITIIGSSHGFDPKKSTTGFVLWINKRGIMVDPPLNSSSFLQSQGVPTRMVDHIILTHCHADHDSGTFQKLLEEYQITVVTTPTILGSFLRKYGALSNLSTDLLRRLFIFRPVMIGEPMIISGAEFRFFYTIHTIPTISFEVFYGGKSIFYSGDTCYDPNRIKDMNKRGIMKTSRMKFFLRPWNHTVVLHEAGVPPIHTPVSVLRALPDEVKNRLYLVHISEHTLPAGSGLKIAKEGVAHTLSLDVMKSSHSEAVDILKLVESVDIFRSIPLTQACEILQTATKRKYSQGSVIIARDTEPDAFYVVASGVVCVNIGELKKNLIVGDYFGEMSLVMGGLRSANVQAVTDVEVLSFNKEDFLSITRNSTESIQFITRLWEMRNEKSWETMSLNSVFSRCTNSQKTAIQSILVRELIKKDETLWCKGEEALFGCLVAEGSFVFKEDDSLESFSQGSFLGDINAMTTQPPSIHKTTVVAKEESVIYKVLSQDLIKFFSNNPGIQLAFLDTIFVDALRDQVQQLVNSKLTY</sequence>
<protein>
    <recommendedName>
        <fullName>cGMP-dependent 3',5'-cGMP phosphodiesterase A</fullName>
        <ecNumber evidence="4 5 9">3.1.4.35</ecNumber>
    </recommendedName>
    <alternativeName>
        <fullName>Cyclic GMP-binding protein A</fullName>
    </alternativeName>
    <alternativeName>
        <fullName>Phosphodiesterase 5</fullName>
        <shortName>DdPDE5</shortName>
    </alternativeName>
    <alternativeName>
        <fullName>Phosphodiesterase D</fullName>
    </alternativeName>
</protein>
<feature type="chain" id="PRO_0000353105" description="cGMP-dependent 3',5'-cGMP phosphodiesterase A">
    <location>
        <begin position="1"/>
        <end position="867"/>
    </location>
</feature>
<feature type="region of interest" description="Disordered" evidence="2">
    <location>
        <begin position="121"/>
        <end position="167"/>
    </location>
</feature>
<feature type="region of interest" description="Disordered" evidence="2">
    <location>
        <begin position="180"/>
        <end position="241"/>
    </location>
</feature>
<feature type="region of interest" description="Phosphodiesterase activity">
    <location>
        <begin position="357"/>
        <end position="503"/>
    </location>
</feature>
<feature type="compositionally biased region" description="Low complexity" evidence="2">
    <location>
        <begin position="121"/>
        <end position="146"/>
    </location>
</feature>
<feature type="compositionally biased region" description="Pro residues" evidence="2">
    <location>
        <begin position="147"/>
        <end position="160"/>
    </location>
</feature>
<feature type="compositionally biased region" description="Low complexity" evidence="2">
    <location>
        <begin position="191"/>
        <end position="220"/>
    </location>
</feature>
<feature type="compositionally biased region" description="Acidic residues" evidence="2">
    <location>
        <begin position="221"/>
        <end position="232"/>
    </location>
</feature>
<feature type="binding site" evidence="1">
    <location>
        <position position="399"/>
    </location>
    <ligand>
        <name>a divalent metal cation</name>
        <dbReference type="ChEBI" id="CHEBI:60240"/>
    </ligand>
</feature>
<feature type="binding site" evidence="1">
    <location>
        <position position="401"/>
    </location>
    <ligand>
        <name>a divalent metal cation</name>
        <dbReference type="ChEBI" id="CHEBI:60240"/>
    </ligand>
</feature>
<feature type="binding site" evidence="1">
    <location>
        <position position="403"/>
    </location>
    <ligand>
        <name>a divalent metal cation</name>
        <dbReference type="ChEBI" id="CHEBI:60240"/>
    </ligand>
</feature>
<feature type="binding site">
    <location>
        <begin position="607"/>
        <end position="721"/>
    </location>
    <ligand>
        <name>a nucleoside 3',5'-cyclic phosphate</name>
        <dbReference type="ChEBI" id="CHEBI:58464"/>
        <label>1</label>
    </ligand>
</feature>
<feature type="binding site">
    <location>
        <begin position="734"/>
        <end position="851"/>
    </location>
    <ligand>
        <name>a nucleoside 3',5'-cyclic phosphate</name>
        <dbReference type="ChEBI" id="CHEBI:58464"/>
        <label>2</label>
    </ligand>
</feature>
<name>PDE5_DICDI</name>
<gene>
    <name type="primary">pdeD</name>
    <name type="synonym">gbpA</name>
    <name type="synonym">pde5</name>
    <name type="ORF">DDB_G0274383</name>
</gene>
<dbReference type="EC" id="3.1.4.35" evidence="4 5 9"/>
<dbReference type="EMBL" id="AF481921">
    <property type="protein sequence ID" value="AAM34039.1"/>
    <property type="molecule type" value="Genomic_DNA"/>
</dbReference>
<dbReference type="EMBL" id="AY047363">
    <property type="protein sequence ID" value="AAL06059.1"/>
    <property type="molecule type" value="Genomic_DNA"/>
</dbReference>
<dbReference type="EMBL" id="AAFI02000012">
    <property type="protein sequence ID" value="EAL70084.1"/>
    <property type="molecule type" value="Genomic_DNA"/>
</dbReference>
<dbReference type="RefSeq" id="XP_644314.1">
    <property type="nucleotide sequence ID" value="XM_639222.1"/>
</dbReference>
<dbReference type="SMR" id="Q8MLZ3"/>
<dbReference type="FunCoup" id="Q8MLZ3">
    <property type="interactions" value="34"/>
</dbReference>
<dbReference type="STRING" id="44689.Q8MLZ3"/>
<dbReference type="PaxDb" id="44689-DDB0185054"/>
<dbReference type="EnsemblProtists" id="EAL70084">
    <property type="protein sequence ID" value="EAL70084"/>
    <property type="gene ID" value="DDB_G0274383"/>
</dbReference>
<dbReference type="GeneID" id="8619742"/>
<dbReference type="KEGG" id="ddi:DDB_G0274383"/>
<dbReference type="dictyBase" id="DDB_G0274383">
    <property type="gene designation" value="pdeD"/>
</dbReference>
<dbReference type="VEuPathDB" id="AmoebaDB:DDB_G0274383"/>
<dbReference type="eggNOG" id="KOG1113">
    <property type="taxonomic scope" value="Eukaryota"/>
</dbReference>
<dbReference type="HOGENOM" id="CLU_010941_0_0_1"/>
<dbReference type="InParanoid" id="Q8MLZ3"/>
<dbReference type="OMA" id="HTIPCIG"/>
<dbReference type="PhylomeDB" id="Q8MLZ3"/>
<dbReference type="BRENDA" id="3.1.4.35">
    <property type="organism ID" value="1939"/>
</dbReference>
<dbReference type="SABIO-RK" id="Q8MLZ3"/>
<dbReference type="PRO" id="PR:Q8MLZ3"/>
<dbReference type="Proteomes" id="UP000002195">
    <property type="component" value="Chromosome 2"/>
</dbReference>
<dbReference type="GO" id="GO:0005952">
    <property type="term" value="C:cAMP-dependent protein kinase complex"/>
    <property type="evidence" value="ECO:0000318"/>
    <property type="project" value="GO_Central"/>
</dbReference>
<dbReference type="GO" id="GO:0005829">
    <property type="term" value="C:cytosol"/>
    <property type="evidence" value="ECO:0000314"/>
    <property type="project" value="dictyBase"/>
</dbReference>
<dbReference type="GO" id="GO:0047555">
    <property type="term" value="F:3',5'-cyclic-GMP phosphodiesterase activity"/>
    <property type="evidence" value="ECO:0000314"/>
    <property type="project" value="dictyBase"/>
</dbReference>
<dbReference type="GO" id="GO:0030552">
    <property type="term" value="F:cAMP binding"/>
    <property type="evidence" value="ECO:0000318"/>
    <property type="project" value="GO_Central"/>
</dbReference>
<dbReference type="GO" id="GO:0004862">
    <property type="term" value="F:cAMP-dependent protein kinase inhibitor activity"/>
    <property type="evidence" value="ECO:0000318"/>
    <property type="project" value="GO_Central"/>
</dbReference>
<dbReference type="GO" id="GO:0030553">
    <property type="term" value="F:cGMP binding"/>
    <property type="evidence" value="ECO:0007669"/>
    <property type="project" value="UniProtKB-KW"/>
</dbReference>
<dbReference type="GO" id="GO:0046872">
    <property type="term" value="F:metal ion binding"/>
    <property type="evidence" value="ECO:0007669"/>
    <property type="project" value="UniProtKB-KW"/>
</dbReference>
<dbReference type="GO" id="GO:0034236">
    <property type="term" value="F:protein kinase A catalytic subunit binding"/>
    <property type="evidence" value="ECO:0000318"/>
    <property type="project" value="GO_Central"/>
</dbReference>
<dbReference type="GO" id="GO:0007189">
    <property type="term" value="P:adenylate cyclase-activating G protein-coupled receptor signaling pathway"/>
    <property type="evidence" value="ECO:0000318"/>
    <property type="project" value="GO_Central"/>
</dbReference>
<dbReference type="GO" id="GO:0031152">
    <property type="term" value="P:aggregation involved in sorocarp development"/>
    <property type="evidence" value="ECO:0000315"/>
    <property type="project" value="dictyBase"/>
</dbReference>
<dbReference type="GO" id="GO:0019934">
    <property type="term" value="P:cGMP-mediated signaling"/>
    <property type="evidence" value="ECO:0000315"/>
    <property type="project" value="dictyBase"/>
</dbReference>
<dbReference type="GO" id="GO:0043327">
    <property type="term" value="P:chemotaxis to cAMP"/>
    <property type="evidence" value="ECO:0000315"/>
    <property type="project" value="dictyBase"/>
</dbReference>
<dbReference type="GO" id="GO:0030837">
    <property type="term" value="P:negative regulation of actin filament polymerization"/>
    <property type="evidence" value="ECO:0000315"/>
    <property type="project" value="dictyBase"/>
</dbReference>
<dbReference type="GO" id="GO:0051898">
    <property type="term" value="P:negative regulation of phosphatidylinositol 3-kinase/protein kinase B signal transduction"/>
    <property type="evidence" value="ECO:0000315"/>
    <property type="project" value="dictyBase"/>
</dbReference>
<dbReference type="GO" id="GO:0046580">
    <property type="term" value="P:negative regulation of Ras protein signal transduction"/>
    <property type="evidence" value="ECO:0000315"/>
    <property type="project" value="dictyBase"/>
</dbReference>
<dbReference type="GO" id="GO:1905511">
    <property type="term" value="P:positive regulation of myosin II filament assembly"/>
    <property type="evidence" value="ECO:0000315"/>
    <property type="project" value="dictyBase"/>
</dbReference>
<dbReference type="GO" id="GO:0072697">
    <property type="term" value="P:protein localization to cell cortex"/>
    <property type="evidence" value="ECO:0000316"/>
    <property type="project" value="dictyBase"/>
</dbReference>
<dbReference type="GO" id="GO:0007165">
    <property type="term" value="P:signal transduction"/>
    <property type="evidence" value="ECO:0000315"/>
    <property type="project" value="dictyBase"/>
</dbReference>
<dbReference type="CDD" id="cd00038">
    <property type="entry name" value="CAP_ED"/>
    <property type="match status" value="2"/>
</dbReference>
<dbReference type="CDD" id="cd07738">
    <property type="entry name" value="DdPDE5-like_MBL-fold"/>
    <property type="match status" value="1"/>
</dbReference>
<dbReference type="FunFam" id="3.60.15.10:FF:000029">
    <property type="entry name" value="Cyclic nucleotide-binding domain protein"/>
    <property type="match status" value="1"/>
</dbReference>
<dbReference type="Gene3D" id="2.60.120.10">
    <property type="entry name" value="Jelly Rolls"/>
    <property type="match status" value="2"/>
</dbReference>
<dbReference type="Gene3D" id="3.60.15.10">
    <property type="entry name" value="Ribonuclease Z/Hydroxyacylglutathione hydrolase-like"/>
    <property type="match status" value="1"/>
</dbReference>
<dbReference type="InterPro" id="IPR050503">
    <property type="entry name" value="cAMP-dep_PK_reg_su-like"/>
</dbReference>
<dbReference type="InterPro" id="IPR018488">
    <property type="entry name" value="cNMP-bd_CS"/>
</dbReference>
<dbReference type="InterPro" id="IPR000595">
    <property type="entry name" value="cNMP-bd_dom"/>
</dbReference>
<dbReference type="InterPro" id="IPR018490">
    <property type="entry name" value="cNMP-bd_dom_sf"/>
</dbReference>
<dbReference type="InterPro" id="IPR001279">
    <property type="entry name" value="Metallo-B-lactamas"/>
</dbReference>
<dbReference type="InterPro" id="IPR036866">
    <property type="entry name" value="RibonucZ/Hydroxyglut_hydro"/>
</dbReference>
<dbReference type="InterPro" id="IPR014710">
    <property type="entry name" value="RmlC-like_jellyroll"/>
</dbReference>
<dbReference type="PANTHER" id="PTHR11635">
    <property type="entry name" value="CAMP-DEPENDENT PROTEIN KINASE REGULATORY CHAIN"/>
    <property type="match status" value="1"/>
</dbReference>
<dbReference type="PANTHER" id="PTHR11635:SF152">
    <property type="entry name" value="CAMP-DEPENDENT PROTEIN KINASE TYPE I REGULATORY SUBUNIT-RELATED"/>
    <property type="match status" value="1"/>
</dbReference>
<dbReference type="Pfam" id="PF00027">
    <property type="entry name" value="cNMP_binding"/>
    <property type="match status" value="1"/>
</dbReference>
<dbReference type="Pfam" id="PF00753">
    <property type="entry name" value="Lactamase_B"/>
    <property type="match status" value="1"/>
</dbReference>
<dbReference type="SMART" id="SM00100">
    <property type="entry name" value="cNMP"/>
    <property type="match status" value="2"/>
</dbReference>
<dbReference type="SMART" id="SM00849">
    <property type="entry name" value="Lactamase_B"/>
    <property type="match status" value="1"/>
</dbReference>
<dbReference type="SUPFAM" id="SSF51206">
    <property type="entry name" value="cAMP-binding domain-like"/>
    <property type="match status" value="2"/>
</dbReference>
<dbReference type="SUPFAM" id="SSF56281">
    <property type="entry name" value="Metallo-hydrolase/oxidoreductase"/>
    <property type="match status" value="1"/>
</dbReference>
<dbReference type="PROSITE" id="PS00889">
    <property type="entry name" value="CNMP_BINDING_2"/>
    <property type="match status" value="1"/>
</dbReference>
<dbReference type="PROSITE" id="PS50042">
    <property type="entry name" value="CNMP_BINDING_3"/>
    <property type="match status" value="2"/>
</dbReference>
<comment type="function">
    <text evidence="3 4 5 9">Phosphodiesterase specific for cGMP, which is activated by cGMP but not by cAMP (Probable) (PubMed:12429831, PubMed:12429832). Involved in the degradation of intracellular cGMP, contributes to the control of cGMP signals (PubMed:12198158, PubMed:12429832).</text>
</comment>
<comment type="catalytic activity">
    <reaction evidence="4 5 9">
        <text>3',5'-cyclic GMP + H2O = GMP + H(+)</text>
        <dbReference type="Rhea" id="RHEA:16957"/>
        <dbReference type="ChEBI" id="CHEBI:15377"/>
        <dbReference type="ChEBI" id="CHEBI:15378"/>
        <dbReference type="ChEBI" id="CHEBI:57746"/>
        <dbReference type="ChEBI" id="CHEBI:58115"/>
        <dbReference type="EC" id="3.1.4.35"/>
    </reaction>
    <physiologicalReaction direction="left-to-right" evidence="4 5 9">
        <dbReference type="Rhea" id="RHEA:16958"/>
    </physiologicalReaction>
</comment>
<comment type="cofactor">
    <cofactor evidence="4">
        <name>Mn(2+)</name>
        <dbReference type="ChEBI" id="CHEBI:29035"/>
    </cofactor>
    <cofactor evidence="4">
        <name>Mg(2+)</name>
        <dbReference type="ChEBI" id="CHEBI:18420"/>
    </cofactor>
    <cofactor evidence="4">
        <name>Zn(2+)</name>
        <dbReference type="ChEBI" id="CHEBI:29105"/>
    </cofactor>
    <text evidence="4">Divalent metal cation. Can use Mn(2+) or, to a lower extent, Mg(2+) or Zn(2+). Half-maximal activation occurs between 10 and 100 uM of Mn(2+) whereas maximal activation occurs with 10 mM of Zn(2+) or Mg(2+).</text>
</comment>
<comment type="biophysicochemical properties">
    <kinetics>
        <KM evidence="5 6">5.2 uM for cGMP</KM>
        <Vmax evidence="5 6">390.0 pmol/min/mg enzyme</Vmax>
        <text>cAMP/cGMP selectivity of 0.003.</text>
    </kinetics>
    <phDependence>
        <text evidence="5 6">Optimum pH is 7.0.</text>
    </phDependence>
</comment>
<comment type="subcellular location">
    <subcellularLocation>
        <location evidence="4 5 7">Cytoplasm</location>
        <location evidence="4 5 7">Cytosol</location>
    </subcellularLocation>
</comment>
<comment type="developmental stage">
    <text evidence="4">Expressed during growth and development, with the highest level of expression during aggregation.</text>
</comment>
<comment type="domain">
    <text>The beta lactamase-like domain catalyzes the hydrolysis of cGMP.</text>
</comment>
<comment type="similarity">
    <text evidence="8">Belongs to the metallo-beta-lactamase superfamily. cNMP phosphodiesterase family.</text>
</comment>
<reference key="1">
    <citation type="journal article" date="2002" name="EMBO J.">
        <title>A novel cGMP signalling pathway mediating myosin phosphorylation and chemotaxis in Dictyostelium.</title>
        <authorList>
            <person name="Bosgraaf L."/>
            <person name="Russcher H."/>
            <person name="Smith J.L."/>
            <person name="Wessels D."/>
            <person name="Soll D.R."/>
            <person name="Van Haastert P.J.M."/>
        </authorList>
    </citation>
    <scope>NUCLEOTIDE SEQUENCE [GENOMIC DNA]</scope>
    <scope>FUNCTION</scope>
    <scope>CATALYTIC ACTIVITY</scope>
</reference>
<reference key="2">
    <citation type="journal article" date="2002" name="Mol. Biol. Cell">
        <title>Identification of a novel type of cGMP phosphodiesterase that is defective in the chemotactic stmF mutants.</title>
        <authorList>
            <person name="Meima M.E."/>
            <person name="Biondi R.M."/>
            <person name="Schaap P."/>
        </authorList>
    </citation>
    <scope>NUCLEOTIDE SEQUENCE [GENOMIC DNA]</scope>
    <scope>FUNCTION</scope>
    <scope>CATALYTIC ACTIVITY</scope>
    <scope>SUBCELLULAR LOCATION</scope>
    <scope>COFACTOR</scope>
    <scope>DEVELOPMENTAL STAGE</scope>
</reference>
<reference key="3">
    <citation type="journal article" date="2002" name="Nature">
        <title>Sequence and analysis of chromosome 2 of Dictyostelium discoideum.</title>
        <authorList>
            <person name="Gloeckner G."/>
            <person name="Eichinger L."/>
            <person name="Szafranski K."/>
            <person name="Pachebat J.A."/>
            <person name="Bankier A.T."/>
            <person name="Dear P.H."/>
            <person name="Lehmann R."/>
            <person name="Baumgart C."/>
            <person name="Parra G."/>
            <person name="Abril J.F."/>
            <person name="Guigo R."/>
            <person name="Kumpf K."/>
            <person name="Tunggal B."/>
            <person name="Cox E.C."/>
            <person name="Quail M.A."/>
            <person name="Platzer M."/>
            <person name="Rosenthal A."/>
            <person name="Noegel A.A."/>
        </authorList>
    </citation>
    <scope>NUCLEOTIDE SEQUENCE [LARGE SCALE GENOMIC DNA]</scope>
    <source>
        <strain>AX4</strain>
    </source>
</reference>
<reference key="4">
    <citation type="journal article" date="2005" name="Nature">
        <title>The genome of the social amoeba Dictyostelium discoideum.</title>
        <authorList>
            <person name="Eichinger L."/>
            <person name="Pachebat J.A."/>
            <person name="Gloeckner G."/>
            <person name="Rajandream M.A."/>
            <person name="Sucgang R."/>
            <person name="Berriman M."/>
            <person name="Song J."/>
            <person name="Olsen R."/>
            <person name="Szafranski K."/>
            <person name="Xu Q."/>
            <person name="Tunggal B."/>
            <person name="Kummerfeld S."/>
            <person name="Madera M."/>
            <person name="Konfortov B.A."/>
            <person name="Rivero F."/>
            <person name="Bankier A.T."/>
            <person name="Lehmann R."/>
            <person name="Hamlin N."/>
            <person name="Davies R."/>
            <person name="Gaudet P."/>
            <person name="Fey P."/>
            <person name="Pilcher K."/>
            <person name="Chen G."/>
            <person name="Saunders D."/>
            <person name="Sodergren E.J."/>
            <person name="Davis P."/>
            <person name="Kerhornou A."/>
            <person name="Nie X."/>
            <person name="Hall N."/>
            <person name="Anjard C."/>
            <person name="Hemphill L."/>
            <person name="Bason N."/>
            <person name="Farbrother P."/>
            <person name="Desany B."/>
            <person name="Just E."/>
            <person name="Morio T."/>
            <person name="Rost R."/>
            <person name="Churcher C.M."/>
            <person name="Cooper J."/>
            <person name="Haydock S."/>
            <person name="van Driessche N."/>
            <person name="Cronin A."/>
            <person name="Goodhead I."/>
            <person name="Muzny D.M."/>
            <person name="Mourier T."/>
            <person name="Pain A."/>
            <person name="Lu M."/>
            <person name="Harper D."/>
            <person name="Lindsay R."/>
            <person name="Hauser H."/>
            <person name="James K.D."/>
            <person name="Quiles M."/>
            <person name="Madan Babu M."/>
            <person name="Saito T."/>
            <person name="Buchrieser C."/>
            <person name="Wardroper A."/>
            <person name="Felder M."/>
            <person name="Thangavelu M."/>
            <person name="Johnson D."/>
            <person name="Knights A."/>
            <person name="Loulseged H."/>
            <person name="Mungall K.L."/>
            <person name="Oliver K."/>
            <person name="Price C."/>
            <person name="Quail M.A."/>
            <person name="Urushihara H."/>
            <person name="Hernandez J."/>
            <person name="Rabbinowitsch E."/>
            <person name="Steffen D."/>
            <person name="Sanders M."/>
            <person name="Ma J."/>
            <person name="Kohara Y."/>
            <person name="Sharp S."/>
            <person name="Simmonds M.N."/>
            <person name="Spiegler S."/>
            <person name="Tivey A."/>
            <person name="Sugano S."/>
            <person name="White B."/>
            <person name="Walker D."/>
            <person name="Woodward J.R."/>
            <person name="Winckler T."/>
            <person name="Tanaka Y."/>
            <person name="Shaulsky G."/>
            <person name="Schleicher M."/>
            <person name="Weinstock G.M."/>
            <person name="Rosenthal A."/>
            <person name="Cox E.C."/>
            <person name="Chisholm R.L."/>
            <person name="Gibbs R.A."/>
            <person name="Loomis W.F."/>
            <person name="Platzer M."/>
            <person name="Kay R.R."/>
            <person name="Williams J.G."/>
            <person name="Dear P.H."/>
            <person name="Noegel A.A."/>
            <person name="Barrell B.G."/>
            <person name="Kuspa A."/>
        </authorList>
    </citation>
    <scope>NUCLEOTIDE SEQUENCE [LARGE SCALE GENOMIC DNA]</scope>
    <source>
        <strain>AX4</strain>
    </source>
</reference>
<reference key="5">
    <citation type="journal article" date="2002" name="Mol. Biol. Cell">
        <title>Identification and characterization of two unusual cGMP-stimulated phosphodiesterases in dictyostelium.</title>
        <authorList>
            <person name="Bosgraaf L."/>
            <person name="Russcher H."/>
            <person name="Snippe H."/>
            <person name="Bader S."/>
            <person name="Wind J."/>
            <person name="Van Haastert P.J.M."/>
        </authorList>
    </citation>
    <scope>FUNCTION</scope>
    <scope>CATALYTIC ACTIVITY</scope>
    <scope>SUBCELLULAR LOCATION</scope>
    <scope>BIOPHYSICOCHEMICAL PROPERTIES</scope>
</reference>
<reference key="6">
    <citation type="journal article" date="2002" name="Proc. Natl. Acad. Sci. U.S.A.">
        <title>Identification of four candidate cGMP targets in Dictyostelium.</title>
        <authorList>
            <person name="Goldberg J.M."/>
            <person name="Bosgraaf L."/>
            <person name="Van Haastert P.J.M."/>
            <person name="Smith J.L."/>
        </authorList>
    </citation>
    <scope>IDENTIFICATION</scope>
</reference>
<reference key="7">
    <citation type="journal article" date="2003" name="J. Biol. Chem.">
        <title>Characterization of a cAMP-stimulated cAMP phosphodiesterase in Dictyostelium discoideum.</title>
        <authorList>
            <person name="Meima M.E."/>
            <person name="Weening K.E."/>
            <person name="Schaap P."/>
        </authorList>
    </citation>
    <scope>BIOPHYSICOCHEMICAL PROPERTIES</scope>
</reference>
<reference key="8">
    <citation type="journal article" date="2007" name="Biochem. J.">
        <title>Seven Dictyostelium discoideum phosphodiesterases degrade three pools of cAMP and cGMP.</title>
        <authorList>
            <person name="Bader S."/>
            <person name="Kortholt A."/>
            <person name="Van Haastert P.J.M."/>
        </authorList>
    </citation>
    <scope>SUBCELLULAR LOCATION</scope>
</reference>
<accession>Q8MLZ3</accession>
<accession>Q554K9</accession>
<organism>
    <name type="scientific">Dictyostelium discoideum</name>
    <name type="common">Social amoeba</name>
    <dbReference type="NCBI Taxonomy" id="44689"/>
    <lineage>
        <taxon>Eukaryota</taxon>
        <taxon>Amoebozoa</taxon>
        <taxon>Evosea</taxon>
        <taxon>Eumycetozoa</taxon>
        <taxon>Dictyostelia</taxon>
        <taxon>Dictyosteliales</taxon>
        <taxon>Dictyosteliaceae</taxon>
        <taxon>Dictyostelium</taxon>
    </lineage>
</organism>
<proteinExistence type="evidence at protein level"/>
<evidence type="ECO:0000255" key="1"/>
<evidence type="ECO:0000256" key="2">
    <source>
        <dbReference type="SAM" id="MobiDB-lite"/>
    </source>
</evidence>
<evidence type="ECO:0000269" key="3">
    <source>
    </source>
</evidence>
<evidence type="ECO:0000269" key="4">
    <source>
    </source>
</evidence>
<evidence type="ECO:0000269" key="5">
    <source>
    </source>
</evidence>
<evidence type="ECO:0000269" key="6">
    <source>
    </source>
</evidence>
<evidence type="ECO:0000269" key="7">
    <source>
    </source>
</evidence>
<evidence type="ECO:0000305" key="8"/>
<evidence type="ECO:0000305" key="9">
    <source>
    </source>
</evidence>
<keyword id="KW-0140">cGMP</keyword>
<keyword id="KW-0142">cGMP-binding</keyword>
<keyword id="KW-0963">Cytoplasm</keyword>
<keyword id="KW-0378">Hydrolase</keyword>
<keyword id="KW-0460">Magnesium</keyword>
<keyword id="KW-0464">Manganese</keyword>
<keyword id="KW-0479">Metal-binding</keyword>
<keyword id="KW-0547">Nucleotide-binding</keyword>
<keyword id="KW-1185">Reference proteome</keyword>
<keyword id="KW-0677">Repeat</keyword>
<keyword id="KW-0862">Zinc</keyword>